<sequence length="430" mass="46133">MTRSEALFEQAKKTIPGGVNSPVRAFNGVGGSPLFIEKADGAYIYDADGKAYIDYVGSWGPMILGHNHPKIREAVLAAVHNGLSFGAPTELEVQMAEKVIAMVPSIEQVRMVSSGTEATMSAIRLARGFTNRDKILKFEGCYHGHADCLLVKAGSGALTLGQPSSPGIPEDFAKHTLTAVYNDLDSVRSLFEQYPTEISCIIIEPVAGNMNCIPPIPGFLEGLRSLCDEFGALLIIDEVMTGFRVSKSGAQGHYGVTPDLTTLGKVIGGGMPVGAFGGRKDVMQFIAPTGPVYQAGTLSGNPIAMSAGLAQMEALCEEGLYEALSAKTKRIAEGFKAAADKHGIPMAINYVGGMFGFFFTEQEHITRFDQVTKCNIEHFRTFYHGMLDEGVYLAPSAYEAGFLSMAHGEEELRLTLEAADRVLARMKAAN</sequence>
<organism>
    <name type="scientific">Shewanella oneidensis (strain ATCC 700550 / JCM 31522 / CIP 106686 / LMG 19005 / NCIMB 14063 / MR-1)</name>
    <dbReference type="NCBI Taxonomy" id="211586"/>
    <lineage>
        <taxon>Bacteria</taxon>
        <taxon>Pseudomonadati</taxon>
        <taxon>Pseudomonadota</taxon>
        <taxon>Gammaproteobacteria</taxon>
        <taxon>Alteromonadales</taxon>
        <taxon>Shewanellaceae</taxon>
        <taxon>Shewanella</taxon>
    </lineage>
</organism>
<accession>Q8EHC8</accession>
<gene>
    <name evidence="1" type="primary">hemL</name>
    <name type="ordered locus">SO_1300</name>
</gene>
<dbReference type="EC" id="5.4.3.8" evidence="1"/>
<dbReference type="EMBL" id="AE014299">
    <property type="protein sequence ID" value="AAN54365.1"/>
    <property type="molecule type" value="Genomic_DNA"/>
</dbReference>
<dbReference type="RefSeq" id="NP_716920.1">
    <property type="nucleotide sequence ID" value="NC_004347.2"/>
</dbReference>
<dbReference type="RefSeq" id="WP_011071513.1">
    <property type="nucleotide sequence ID" value="NC_004347.2"/>
</dbReference>
<dbReference type="SMR" id="Q8EHC8"/>
<dbReference type="STRING" id="211586.SO_1300"/>
<dbReference type="PaxDb" id="211586-SO_1300"/>
<dbReference type="KEGG" id="son:SO_1300"/>
<dbReference type="PATRIC" id="fig|211586.12.peg.1250"/>
<dbReference type="eggNOG" id="COG0001">
    <property type="taxonomic scope" value="Bacteria"/>
</dbReference>
<dbReference type="HOGENOM" id="CLU_016922_1_5_6"/>
<dbReference type="OrthoDB" id="9801052at2"/>
<dbReference type="PhylomeDB" id="Q8EHC8"/>
<dbReference type="BioCyc" id="SONE211586:G1GMP-1202-MONOMER"/>
<dbReference type="UniPathway" id="UPA00251">
    <property type="reaction ID" value="UER00317"/>
</dbReference>
<dbReference type="Proteomes" id="UP000008186">
    <property type="component" value="Chromosome"/>
</dbReference>
<dbReference type="GO" id="GO:0005737">
    <property type="term" value="C:cytoplasm"/>
    <property type="evidence" value="ECO:0007669"/>
    <property type="project" value="UniProtKB-SubCell"/>
</dbReference>
<dbReference type="GO" id="GO:0042286">
    <property type="term" value="F:glutamate-1-semialdehyde 2,1-aminomutase activity"/>
    <property type="evidence" value="ECO:0007669"/>
    <property type="project" value="UniProtKB-UniRule"/>
</dbReference>
<dbReference type="GO" id="GO:0030170">
    <property type="term" value="F:pyridoxal phosphate binding"/>
    <property type="evidence" value="ECO:0007669"/>
    <property type="project" value="InterPro"/>
</dbReference>
<dbReference type="GO" id="GO:0008483">
    <property type="term" value="F:transaminase activity"/>
    <property type="evidence" value="ECO:0007669"/>
    <property type="project" value="InterPro"/>
</dbReference>
<dbReference type="GO" id="GO:0006782">
    <property type="term" value="P:protoporphyrinogen IX biosynthetic process"/>
    <property type="evidence" value="ECO:0007669"/>
    <property type="project" value="UniProtKB-UniRule"/>
</dbReference>
<dbReference type="CDD" id="cd00610">
    <property type="entry name" value="OAT_like"/>
    <property type="match status" value="1"/>
</dbReference>
<dbReference type="FunFam" id="3.40.640.10:FF:000021">
    <property type="entry name" value="Glutamate-1-semialdehyde 2,1-aminomutase"/>
    <property type="match status" value="1"/>
</dbReference>
<dbReference type="Gene3D" id="3.90.1150.10">
    <property type="entry name" value="Aspartate Aminotransferase, domain 1"/>
    <property type="match status" value="1"/>
</dbReference>
<dbReference type="Gene3D" id="3.40.640.10">
    <property type="entry name" value="Type I PLP-dependent aspartate aminotransferase-like (Major domain)"/>
    <property type="match status" value="1"/>
</dbReference>
<dbReference type="HAMAP" id="MF_00375">
    <property type="entry name" value="HemL_aminotrans_3"/>
    <property type="match status" value="1"/>
</dbReference>
<dbReference type="InterPro" id="IPR004639">
    <property type="entry name" value="4pyrrol_synth_GluAld_NH2Trfase"/>
</dbReference>
<dbReference type="InterPro" id="IPR005814">
    <property type="entry name" value="Aminotrans_3"/>
</dbReference>
<dbReference type="InterPro" id="IPR049704">
    <property type="entry name" value="Aminotrans_3_PPA_site"/>
</dbReference>
<dbReference type="InterPro" id="IPR015424">
    <property type="entry name" value="PyrdxlP-dep_Trfase"/>
</dbReference>
<dbReference type="InterPro" id="IPR015421">
    <property type="entry name" value="PyrdxlP-dep_Trfase_major"/>
</dbReference>
<dbReference type="InterPro" id="IPR015422">
    <property type="entry name" value="PyrdxlP-dep_Trfase_small"/>
</dbReference>
<dbReference type="NCBIfam" id="TIGR00713">
    <property type="entry name" value="hemL"/>
    <property type="match status" value="1"/>
</dbReference>
<dbReference type="NCBIfam" id="NF000818">
    <property type="entry name" value="PRK00062.1"/>
    <property type="match status" value="1"/>
</dbReference>
<dbReference type="PANTHER" id="PTHR43713">
    <property type="entry name" value="GLUTAMATE-1-SEMIALDEHYDE 2,1-AMINOMUTASE"/>
    <property type="match status" value="1"/>
</dbReference>
<dbReference type="PANTHER" id="PTHR43713:SF3">
    <property type="entry name" value="GLUTAMATE-1-SEMIALDEHYDE 2,1-AMINOMUTASE 1, CHLOROPLASTIC-RELATED"/>
    <property type="match status" value="1"/>
</dbReference>
<dbReference type="Pfam" id="PF00202">
    <property type="entry name" value="Aminotran_3"/>
    <property type="match status" value="1"/>
</dbReference>
<dbReference type="SUPFAM" id="SSF53383">
    <property type="entry name" value="PLP-dependent transferases"/>
    <property type="match status" value="1"/>
</dbReference>
<dbReference type="PROSITE" id="PS00600">
    <property type="entry name" value="AA_TRANSFER_CLASS_3"/>
    <property type="match status" value="1"/>
</dbReference>
<reference key="1">
    <citation type="journal article" date="2002" name="Nat. Biotechnol.">
        <title>Genome sequence of the dissimilatory metal ion-reducing bacterium Shewanella oneidensis.</title>
        <authorList>
            <person name="Heidelberg J.F."/>
            <person name="Paulsen I.T."/>
            <person name="Nelson K.E."/>
            <person name="Gaidos E.J."/>
            <person name="Nelson W.C."/>
            <person name="Read T.D."/>
            <person name="Eisen J.A."/>
            <person name="Seshadri R."/>
            <person name="Ward N.L."/>
            <person name="Methe B.A."/>
            <person name="Clayton R.A."/>
            <person name="Meyer T."/>
            <person name="Tsapin A."/>
            <person name="Scott J."/>
            <person name="Beanan M.J."/>
            <person name="Brinkac L.M."/>
            <person name="Daugherty S.C."/>
            <person name="DeBoy R.T."/>
            <person name="Dodson R.J."/>
            <person name="Durkin A.S."/>
            <person name="Haft D.H."/>
            <person name="Kolonay J.F."/>
            <person name="Madupu R."/>
            <person name="Peterson J.D."/>
            <person name="Umayam L.A."/>
            <person name="White O."/>
            <person name="Wolf A.M."/>
            <person name="Vamathevan J.J."/>
            <person name="Weidman J.F."/>
            <person name="Impraim M."/>
            <person name="Lee K."/>
            <person name="Berry K.J."/>
            <person name="Lee C."/>
            <person name="Mueller J."/>
            <person name="Khouri H.M."/>
            <person name="Gill J."/>
            <person name="Utterback T.R."/>
            <person name="McDonald L.A."/>
            <person name="Feldblyum T.V."/>
            <person name="Smith H.O."/>
            <person name="Venter J.C."/>
            <person name="Nealson K.H."/>
            <person name="Fraser C.M."/>
        </authorList>
    </citation>
    <scope>NUCLEOTIDE SEQUENCE [LARGE SCALE GENOMIC DNA]</scope>
    <source>
        <strain>ATCC 700550 / JCM 31522 / CIP 106686 / LMG 19005 / NCIMB 14063 / MR-1</strain>
    </source>
</reference>
<comment type="catalytic activity">
    <reaction evidence="1">
        <text>(S)-4-amino-5-oxopentanoate = 5-aminolevulinate</text>
        <dbReference type="Rhea" id="RHEA:14265"/>
        <dbReference type="ChEBI" id="CHEBI:57501"/>
        <dbReference type="ChEBI" id="CHEBI:356416"/>
        <dbReference type="EC" id="5.4.3.8"/>
    </reaction>
</comment>
<comment type="cofactor">
    <cofactor evidence="1">
        <name>pyridoxal 5'-phosphate</name>
        <dbReference type="ChEBI" id="CHEBI:597326"/>
    </cofactor>
</comment>
<comment type="pathway">
    <text evidence="1">Porphyrin-containing compound metabolism; protoporphyrin-IX biosynthesis; 5-aminolevulinate from L-glutamyl-tRNA(Glu): step 2/2.</text>
</comment>
<comment type="subunit">
    <text evidence="1">Homodimer.</text>
</comment>
<comment type="subcellular location">
    <subcellularLocation>
        <location evidence="1">Cytoplasm</location>
    </subcellularLocation>
</comment>
<comment type="similarity">
    <text evidence="1">Belongs to the class-III pyridoxal-phosphate-dependent aminotransferase family. HemL subfamily.</text>
</comment>
<keyword id="KW-0963">Cytoplasm</keyword>
<keyword id="KW-0413">Isomerase</keyword>
<keyword id="KW-0627">Porphyrin biosynthesis</keyword>
<keyword id="KW-0663">Pyridoxal phosphate</keyword>
<keyword id="KW-1185">Reference proteome</keyword>
<feature type="chain" id="PRO_0000120439" description="Glutamate-1-semialdehyde 2,1-aminomutase">
    <location>
        <begin position="1"/>
        <end position="430"/>
    </location>
</feature>
<feature type="modified residue" description="N6-(pyridoxal phosphate)lysine" evidence="1">
    <location>
        <position position="265"/>
    </location>
</feature>
<protein>
    <recommendedName>
        <fullName evidence="1">Glutamate-1-semialdehyde 2,1-aminomutase</fullName>
        <shortName evidence="1">GSA</shortName>
        <ecNumber evidence="1">5.4.3.8</ecNumber>
    </recommendedName>
    <alternativeName>
        <fullName evidence="1">Glutamate-1-semialdehyde aminotransferase</fullName>
        <shortName evidence="1">GSA-AT</shortName>
    </alternativeName>
</protein>
<name>GSA_SHEON</name>
<proteinExistence type="inferred from homology"/>
<evidence type="ECO:0000255" key="1">
    <source>
        <dbReference type="HAMAP-Rule" id="MF_00375"/>
    </source>
</evidence>